<reference key="1">
    <citation type="journal article" date="2003" name="Proc. Natl. Acad. Sci. U.S.A.">
        <title>The complete genome sequence of the Arabidopsis and tomato pathogen Pseudomonas syringae pv. tomato DC3000.</title>
        <authorList>
            <person name="Buell C.R."/>
            <person name="Joardar V."/>
            <person name="Lindeberg M."/>
            <person name="Selengut J."/>
            <person name="Paulsen I.T."/>
            <person name="Gwinn M.L."/>
            <person name="Dodson R.J."/>
            <person name="DeBoy R.T."/>
            <person name="Durkin A.S."/>
            <person name="Kolonay J.F."/>
            <person name="Madupu R."/>
            <person name="Daugherty S.C."/>
            <person name="Brinkac L.M."/>
            <person name="Beanan M.J."/>
            <person name="Haft D.H."/>
            <person name="Nelson W.C."/>
            <person name="Davidsen T.M."/>
            <person name="Zafar N."/>
            <person name="Zhou L."/>
            <person name="Liu J."/>
            <person name="Yuan Q."/>
            <person name="Khouri H.M."/>
            <person name="Fedorova N.B."/>
            <person name="Tran B."/>
            <person name="Russell D."/>
            <person name="Berry K.J."/>
            <person name="Utterback T.R."/>
            <person name="Van Aken S.E."/>
            <person name="Feldblyum T.V."/>
            <person name="D'Ascenzo M."/>
            <person name="Deng W.-L."/>
            <person name="Ramos A.R."/>
            <person name="Alfano J.R."/>
            <person name="Cartinhour S."/>
            <person name="Chatterjee A.K."/>
            <person name="Delaney T.P."/>
            <person name="Lazarowitz S.G."/>
            <person name="Martin G.B."/>
            <person name="Schneider D.J."/>
            <person name="Tang X."/>
            <person name="Bender C.L."/>
            <person name="White O."/>
            <person name="Fraser C.M."/>
            <person name="Collmer A."/>
        </authorList>
    </citation>
    <scope>NUCLEOTIDE SEQUENCE [LARGE SCALE GENOMIC DNA]</scope>
    <source>
        <strain>ATCC BAA-871 / DC3000</strain>
    </source>
</reference>
<proteinExistence type="inferred from homology"/>
<keyword id="KW-0012">Acyltransferase</keyword>
<keyword id="KW-0963">Cytoplasm</keyword>
<keyword id="KW-0441">Lipid A biosynthesis</keyword>
<keyword id="KW-0444">Lipid biosynthesis</keyword>
<keyword id="KW-0443">Lipid metabolism</keyword>
<keyword id="KW-1185">Reference proteome</keyword>
<keyword id="KW-0677">Repeat</keyword>
<keyword id="KW-0808">Transferase</keyword>
<feature type="chain" id="PRO_0000188060" description="Acyl-[acyl-carrier-protein]--UDP-N-acetylglucosamine O-acyltransferase">
    <location>
        <begin position="1"/>
        <end position="258"/>
    </location>
</feature>
<gene>
    <name evidence="1" type="primary">lpxA</name>
    <name type="ordered locus">PSPTO_1546</name>
</gene>
<comment type="function">
    <text evidence="1">Involved in the biosynthesis of lipid A, a phosphorylated glycolipid that anchors the lipopolysaccharide to the outer membrane of the cell.</text>
</comment>
<comment type="catalytic activity">
    <reaction evidence="1">
        <text>a (3R)-hydroxyacyl-[ACP] + UDP-N-acetyl-alpha-D-glucosamine = a UDP-3-O-[(3R)-3-hydroxyacyl]-N-acetyl-alpha-D-glucosamine + holo-[ACP]</text>
        <dbReference type="Rhea" id="RHEA:67812"/>
        <dbReference type="Rhea" id="RHEA-COMP:9685"/>
        <dbReference type="Rhea" id="RHEA-COMP:9945"/>
        <dbReference type="ChEBI" id="CHEBI:57705"/>
        <dbReference type="ChEBI" id="CHEBI:64479"/>
        <dbReference type="ChEBI" id="CHEBI:78827"/>
        <dbReference type="ChEBI" id="CHEBI:173225"/>
        <dbReference type="EC" id="2.3.1.129"/>
    </reaction>
</comment>
<comment type="pathway">
    <text evidence="1">Glycolipid biosynthesis; lipid IV(A) biosynthesis; lipid IV(A) from (3R)-3-hydroxytetradecanoyl-[acyl-carrier-protein] and UDP-N-acetyl-alpha-D-glucosamine: step 1/6.</text>
</comment>
<comment type="subunit">
    <text evidence="1">Homotrimer.</text>
</comment>
<comment type="subcellular location">
    <subcellularLocation>
        <location evidence="1">Cytoplasm</location>
    </subcellularLocation>
</comment>
<comment type="similarity">
    <text evidence="1">Belongs to the transferase hexapeptide repeat family. LpxA subfamily.</text>
</comment>
<name>LPXA_PSESM</name>
<sequence length="258" mass="27954">MSLIDPRAIIDPTAILADSVEVGPWSIIGPGVEIGEGTVVGPHVVLRGPTKIGKHNRIYQFSSVGEDTPDLKYKGEETRLVIGDHNVIREGVTIHRGTVQDRAETTLGDHNLIMAYAHIGHDSVIGNHVILVNNTALAGHVHVDDWAILSGFTLVHQFCHIGAHSFSGMGTAIGKDVPAFVTVFGNPAEARSMNFEGMRRRGFSEEAIHALRRAYKTVYRQGLTIAQALSDLAEPAAQFPEVAVFLQSIQTSTRGIIR</sequence>
<protein>
    <recommendedName>
        <fullName evidence="1">Acyl-[acyl-carrier-protein]--UDP-N-acetylglucosamine O-acyltransferase</fullName>
        <shortName evidence="1">UDP-N-acetylglucosamine acyltransferase</shortName>
        <ecNumber evidence="1">2.3.1.129</ecNumber>
    </recommendedName>
</protein>
<accession>Q886N1</accession>
<dbReference type="EC" id="2.3.1.129" evidence="1"/>
<dbReference type="EMBL" id="AE016853">
    <property type="protein sequence ID" value="AAO55066.1"/>
    <property type="molecule type" value="Genomic_DNA"/>
</dbReference>
<dbReference type="RefSeq" id="NP_791371.1">
    <property type="nucleotide sequence ID" value="NC_004578.1"/>
</dbReference>
<dbReference type="RefSeq" id="WP_011103594.1">
    <property type="nucleotide sequence ID" value="NC_004578.1"/>
</dbReference>
<dbReference type="SMR" id="Q886N1"/>
<dbReference type="STRING" id="223283.PSPTO_1546"/>
<dbReference type="GeneID" id="1183183"/>
<dbReference type="KEGG" id="pst:PSPTO_1546"/>
<dbReference type="PATRIC" id="fig|223283.9.peg.1572"/>
<dbReference type="eggNOG" id="COG1043">
    <property type="taxonomic scope" value="Bacteria"/>
</dbReference>
<dbReference type="HOGENOM" id="CLU_061249_0_0_6"/>
<dbReference type="OrthoDB" id="9807278at2"/>
<dbReference type="PhylomeDB" id="Q886N1"/>
<dbReference type="UniPathway" id="UPA00359">
    <property type="reaction ID" value="UER00477"/>
</dbReference>
<dbReference type="Proteomes" id="UP000002515">
    <property type="component" value="Chromosome"/>
</dbReference>
<dbReference type="GO" id="GO:0005737">
    <property type="term" value="C:cytoplasm"/>
    <property type="evidence" value="ECO:0007669"/>
    <property type="project" value="UniProtKB-SubCell"/>
</dbReference>
<dbReference type="GO" id="GO:0016020">
    <property type="term" value="C:membrane"/>
    <property type="evidence" value="ECO:0007669"/>
    <property type="project" value="GOC"/>
</dbReference>
<dbReference type="GO" id="GO:0008780">
    <property type="term" value="F:acyl-[acyl-carrier-protein]-UDP-N-acetylglucosamine O-acyltransferase activity"/>
    <property type="evidence" value="ECO:0007669"/>
    <property type="project" value="UniProtKB-UniRule"/>
</dbReference>
<dbReference type="GO" id="GO:0009245">
    <property type="term" value="P:lipid A biosynthetic process"/>
    <property type="evidence" value="ECO:0007669"/>
    <property type="project" value="UniProtKB-UniRule"/>
</dbReference>
<dbReference type="CDD" id="cd03351">
    <property type="entry name" value="LbH_UDP-GlcNAc_AT"/>
    <property type="match status" value="1"/>
</dbReference>
<dbReference type="FunFam" id="2.160.10.10:FF:000003">
    <property type="entry name" value="Acyl-[acyl-carrier-protein]--UDP-N-acetylglucosamine O-acyltransferase"/>
    <property type="match status" value="1"/>
</dbReference>
<dbReference type="Gene3D" id="2.160.10.10">
    <property type="entry name" value="Hexapeptide repeat proteins"/>
    <property type="match status" value="1"/>
</dbReference>
<dbReference type="Gene3D" id="1.20.1180.10">
    <property type="entry name" value="Udp N-acetylglucosamine O-acyltransferase, C-terminal domain"/>
    <property type="match status" value="1"/>
</dbReference>
<dbReference type="HAMAP" id="MF_00387">
    <property type="entry name" value="LpxA"/>
    <property type="match status" value="1"/>
</dbReference>
<dbReference type="InterPro" id="IPR029098">
    <property type="entry name" value="Acetyltransf_C"/>
</dbReference>
<dbReference type="InterPro" id="IPR037157">
    <property type="entry name" value="Acetyltransf_C_sf"/>
</dbReference>
<dbReference type="InterPro" id="IPR001451">
    <property type="entry name" value="Hexapep"/>
</dbReference>
<dbReference type="InterPro" id="IPR018357">
    <property type="entry name" value="Hexapep_transf_CS"/>
</dbReference>
<dbReference type="InterPro" id="IPR010137">
    <property type="entry name" value="Lipid_A_LpxA"/>
</dbReference>
<dbReference type="InterPro" id="IPR011004">
    <property type="entry name" value="Trimer_LpxA-like_sf"/>
</dbReference>
<dbReference type="NCBIfam" id="TIGR01852">
    <property type="entry name" value="lipid_A_lpxA"/>
    <property type="match status" value="1"/>
</dbReference>
<dbReference type="NCBIfam" id="NF003657">
    <property type="entry name" value="PRK05289.1"/>
    <property type="match status" value="1"/>
</dbReference>
<dbReference type="PANTHER" id="PTHR43480">
    <property type="entry name" value="ACYL-[ACYL-CARRIER-PROTEIN]--UDP-N-ACETYLGLUCOSAMINE O-ACYLTRANSFERASE"/>
    <property type="match status" value="1"/>
</dbReference>
<dbReference type="PANTHER" id="PTHR43480:SF1">
    <property type="entry name" value="ACYL-[ACYL-CARRIER-PROTEIN]--UDP-N-ACETYLGLUCOSAMINE O-ACYLTRANSFERASE, MITOCHONDRIAL-RELATED"/>
    <property type="match status" value="1"/>
</dbReference>
<dbReference type="Pfam" id="PF13720">
    <property type="entry name" value="Acetyltransf_11"/>
    <property type="match status" value="1"/>
</dbReference>
<dbReference type="Pfam" id="PF00132">
    <property type="entry name" value="Hexapep"/>
    <property type="match status" value="1"/>
</dbReference>
<dbReference type="PIRSF" id="PIRSF000456">
    <property type="entry name" value="UDP-GlcNAc_acltr"/>
    <property type="match status" value="1"/>
</dbReference>
<dbReference type="SUPFAM" id="SSF51161">
    <property type="entry name" value="Trimeric LpxA-like enzymes"/>
    <property type="match status" value="1"/>
</dbReference>
<dbReference type="PROSITE" id="PS00101">
    <property type="entry name" value="HEXAPEP_TRANSFERASES"/>
    <property type="match status" value="1"/>
</dbReference>
<organism>
    <name type="scientific">Pseudomonas syringae pv. tomato (strain ATCC BAA-871 / DC3000)</name>
    <dbReference type="NCBI Taxonomy" id="223283"/>
    <lineage>
        <taxon>Bacteria</taxon>
        <taxon>Pseudomonadati</taxon>
        <taxon>Pseudomonadota</taxon>
        <taxon>Gammaproteobacteria</taxon>
        <taxon>Pseudomonadales</taxon>
        <taxon>Pseudomonadaceae</taxon>
        <taxon>Pseudomonas</taxon>
    </lineage>
</organism>
<evidence type="ECO:0000255" key="1">
    <source>
        <dbReference type="HAMAP-Rule" id="MF_00387"/>
    </source>
</evidence>